<keyword id="KW-0998">Cell outer membrane</keyword>
<keyword id="KW-0143">Chaperone</keyword>
<keyword id="KW-0449">Lipoprotein</keyword>
<keyword id="KW-0472">Membrane</keyword>
<keyword id="KW-0564">Palmitate</keyword>
<keyword id="KW-0653">Protein transport</keyword>
<keyword id="KW-0732">Signal</keyword>
<keyword id="KW-0813">Transport</keyword>
<accession>B1XAQ0</accession>
<organism>
    <name type="scientific">Escherichia coli (strain K12 / DH10B)</name>
    <dbReference type="NCBI Taxonomy" id="316385"/>
    <lineage>
        <taxon>Bacteria</taxon>
        <taxon>Pseudomonadati</taxon>
        <taxon>Pseudomonadota</taxon>
        <taxon>Gammaproteobacteria</taxon>
        <taxon>Enterobacterales</taxon>
        <taxon>Enterobacteriaceae</taxon>
        <taxon>Escherichia</taxon>
    </lineage>
</organism>
<comment type="function">
    <text evidence="1">Plays a critical role in the incorporation of lipoproteins in the outer membrane after they are released by the LolA protein.</text>
</comment>
<comment type="subunit">
    <text evidence="1">Monomer.</text>
</comment>
<comment type="subcellular location">
    <subcellularLocation>
        <location evidence="1">Cell outer membrane</location>
        <topology evidence="1">Lipid-anchor</topology>
    </subcellularLocation>
</comment>
<comment type="similarity">
    <text evidence="1">Belongs to the LolB family.</text>
</comment>
<evidence type="ECO:0000255" key="1">
    <source>
        <dbReference type="HAMAP-Rule" id="MF_00233"/>
    </source>
</evidence>
<name>LOLB_ECODH</name>
<reference key="1">
    <citation type="journal article" date="2008" name="J. Bacteriol.">
        <title>The complete genome sequence of Escherichia coli DH10B: insights into the biology of a laboratory workhorse.</title>
        <authorList>
            <person name="Durfee T."/>
            <person name="Nelson R."/>
            <person name="Baldwin S."/>
            <person name="Plunkett G. III"/>
            <person name="Burland V."/>
            <person name="Mau B."/>
            <person name="Petrosino J.F."/>
            <person name="Qin X."/>
            <person name="Muzny D.M."/>
            <person name="Ayele M."/>
            <person name="Gibbs R.A."/>
            <person name="Csorgo B."/>
            <person name="Posfai G."/>
            <person name="Weinstock G.M."/>
            <person name="Blattner F.R."/>
        </authorList>
    </citation>
    <scope>NUCLEOTIDE SEQUENCE [LARGE SCALE GENOMIC DNA]</scope>
    <source>
        <strain>K12 / DH10B</strain>
    </source>
</reference>
<dbReference type="EMBL" id="CP000948">
    <property type="protein sequence ID" value="ACB02379.1"/>
    <property type="molecule type" value="Genomic_DNA"/>
</dbReference>
<dbReference type="RefSeq" id="WP_001130692.1">
    <property type="nucleotide sequence ID" value="NC_010473.1"/>
</dbReference>
<dbReference type="BMRB" id="B1XAQ0"/>
<dbReference type="SMR" id="B1XAQ0"/>
<dbReference type="GeneID" id="93775274"/>
<dbReference type="KEGG" id="ecd:ECDH10B_1262"/>
<dbReference type="HOGENOM" id="CLU_092816_1_1_6"/>
<dbReference type="GO" id="GO:0009279">
    <property type="term" value="C:cell outer membrane"/>
    <property type="evidence" value="ECO:0007669"/>
    <property type="project" value="UniProtKB-SubCell"/>
</dbReference>
<dbReference type="GO" id="GO:0044874">
    <property type="term" value="P:lipoprotein localization to outer membrane"/>
    <property type="evidence" value="ECO:0007669"/>
    <property type="project" value="UniProtKB-UniRule"/>
</dbReference>
<dbReference type="GO" id="GO:0015031">
    <property type="term" value="P:protein transport"/>
    <property type="evidence" value="ECO:0007669"/>
    <property type="project" value="UniProtKB-KW"/>
</dbReference>
<dbReference type="CDD" id="cd16326">
    <property type="entry name" value="LolB"/>
    <property type="match status" value="1"/>
</dbReference>
<dbReference type="FunFam" id="2.50.20.10:FF:000002">
    <property type="entry name" value="Outer-membrane lipoprotein LolB"/>
    <property type="match status" value="1"/>
</dbReference>
<dbReference type="Gene3D" id="2.50.20.10">
    <property type="entry name" value="Lipoprotein localisation LolA/LolB/LppX"/>
    <property type="match status" value="1"/>
</dbReference>
<dbReference type="HAMAP" id="MF_00233">
    <property type="entry name" value="LolB"/>
    <property type="match status" value="1"/>
</dbReference>
<dbReference type="InterPro" id="IPR029046">
    <property type="entry name" value="LolA/LolB/LppX"/>
</dbReference>
<dbReference type="InterPro" id="IPR004565">
    <property type="entry name" value="OM_lipoprot_LolB"/>
</dbReference>
<dbReference type="NCBIfam" id="TIGR00548">
    <property type="entry name" value="lolB"/>
    <property type="match status" value="1"/>
</dbReference>
<dbReference type="Pfam" id="PF03550">
    <property type="entry name" value="LolB"/>
    <property type="match status" value="1"/>
</dbReference>
<dbReference type="SUPFAM" id="SSF89392">
    <property type="entry name" value="Prokaryotic lipoproteins and lipoprotein localization factors"/>
    <property type="match status" value="1"/>
</dbReference>
<dbReference type="PROSITE" id="PS51257">
    <property type="entry name" value="PROKAR_LIPOPROTEIN"/>
    <property type="match status" value="1"/>
</dbReference>
<gene>
    <name evidence="1" type="primary">lolB</name>
    <name type="ordered locus">ECDH10B_1262</name>
</gene>
<protein>
    <recommendedName>
        <fullName evidence="1">Outer-membrane lipoprotein LolB</fullName>
    </recommendedName>
</protein>
<sequence length="207" mass="23551">MPLPDFRLIRLLPLAALVLTACSVTTPKGPGKSPDSPQWRQHQQDVRNLNQYQTRGAFAYISDQQKVYARFFWQQTGQDRYRLLLTNPLGSTELELNAQPGNVQLVDNKGQRYTADDAEEMIGKLTGMPIPLNSLRQWILGLPGDATDYKLDDQYRLSEITYSQNGKNWKVVYGGYDTKTQPAMPANMELTDGGQRIKLKMDNWIVK</sequence>
<proteinExistence type="inferred from homology"/>
<feature type="signal peptide" evidence="1">
    <location>
        <begin position="1"/>
        <end position="21"/>
    </location>
</feature>
<feature type="chain" id="PRO_1000100496" description="Outer-membrane lipoprotein LolB">
    <location>
        <begin position="22"/>
        <end position="207"/>
    </location>
</feature>
<feature type="lipid moiety-binding region" description="N-palmitoyl cysteine" evidence="1">
    <location>
        <position position="22"/>
    </location>
</feature>
<feature type="lipid moiety-binding region" description="S-diacylglycerol cysteine" evidence="1">
    <location>
        <position position="22"/>
    </location>
</feature>